<feature type="chain" id="PRO_0000140579" description="Chorismate synthase">
    <location>
        <begin position="1"/>
        <end position="410"/>
    </location>
</feature>
<feature type="binding site" evidence="1">
    <location>
        <position position="43"/>
    </location>
    <ligand>
        <name>NADP(+)</name>
        <dbReference type="ChEBI" id="CHEBI:58349"/>
    </ligand>
</feature>
<feature type="binding site" evidence="1">
    <location>
        <position position="49"/>
    </location>
    <ligand>
        <name>NADP(+)</name>
        <dbReference type="ChEBI" id="CHEBI:58349"/>
    </ligand>
</feature>
<feature type="binding site" evidence="1">
    <location>
        <begin position="143"/>
        <end position="145"/>
    </location>
    <ligand>
        <name>FMN</name>
        <dbReference type="ChEBI" id="CHEBI:58210"/>
    </ligand>
</feature>
<feature type="binding site" evidence="1">
    <location>
        <begin position="264"/>
        <end position="265"/>
    </location>
    <ligand>
        <name>FMN</name>
        <dbReference type="ChEBI" id="CHEBI:58210"/>
    </ligand>
</feature>
<feature type="binding site" evidence="1">
    <location>
        <position position="308"/>
    </location>
    <ligand>
        <name>FMN</name>
        <dbReference type="ChEBI" id="CHEBI:58210"/>
    </ligand>
</feature>
<feature type="binding site" evidence="1">
    <location>
        <begin position="323"/>
        <end position="327"/>
    </location>
    <ligand>
        <name>FMN</name>
        <dbReference type="ChEBI" id="CHEBI:58210"/>
    </ligand>
</feature>
<feature type="binding site" evidence="1">
    <location>
        <position position="349"/>
    </location>
    <ligand>
        <name>FMN</name>
        <dbReference type="ChEBI" id="CHEBI:58210"/>
    </ligand>
</feature>
<keyword id="KW-0028">Amino-acid biosynthesis</keyword>
<keyword id="KW-0057">Aromatic amino acid biosynthesis</keyword>
<keyword id="KW-0274">FAD</keyword>
<keyword id="KW-0285">Flavoprotein</keyword>
<keyword id="KW-0288">FMN</keyword>
<keyword id="KW-0456">Lyase</keyword>
<keyword id="KW-0521">NADP</keyword>
<keyword id="KW-1185">Reference proteome</keyword>
<sequence>MLGMLRWTTAGESHGQALIATVEHMPAGVPVTKDEVSYQLARRRLGYGRGARMKFEQDALTFLTGIRHGLTLGSPISIMIGNTEWDKWTTIMSSDALDMEDPDNVAAMSSGRGAKLTRPRPGHADYAGMLKYGFDDARNVLERSSARETAARVAAATVARSFLRETLGVEVLSHVISIGASEPYTGAEPTFADIQAIDDSPVRAFGKDAEESMIAEIEAAKKAGDTLGGIVEVIVEGLPIGLGSHISGEDRLDAQIAAALMGIQAIKGVEIGDGFEEARRRGSEAHDEVFLDDNGVYRNTNRAGGLEGGMTNGETLRVRAGMKPISTVPRALKTIDMENGKAATGIHQRSDVCAVPAAGVVAEAMVTLVLARAVLQKFGGDSLSETKSNIDTYLKNIEERMKFEGLEDGA</sequence>
<evidence type="ECO:0000255" key="1">
    <source>
        <dbReference type="HAMAP-Rule" id="MF_00300"/>
    </source>
</evidence>
<comment type="function">
    <text evidence="1">Catalyzes the anti-1,4-elimination of the C-3 phosphate and the C-6 proR hydrogen from 5-enolpyruvylshikimate-3-phosphate (EPSP) to yield chorismate, which is the branch point compound that serves as the starting substrate for the three terminal pathways of aromatic amino acid biosynthesis. This reaction introduces a second double bond into the aromatic ring system.</text>
</comment>
<comment type="catalytic activity">
    <reaction evidence="1">
        <text>5-O-(1-carboxyvinyl)-3-phosphoshikimate = chorismate + phosphate</text>
        <dbReference type="Rhea" id="RHEA:21020"/>
        <dbReference type="ChEBI" id="CHEBI:29748"/>
        <dbReference type="ChEBI" id="CHEBI:43474"/>
        <dbReference type="ChEBI" id="CHEBI:57701"/>
        <dbReference type="EC" id="4.2.3.5"/>
    </reaction>
</comment>
<comment type="cofactor">
    <cofactor evidence="1">
        <name>FMNH2</name>
        <dbReference type="ChEBI" id="CHEBI:57618"/>
    </cofactor>
    <text evidence="1">Reduced FMN (FMNH(2)).</text>
</comment>
<comment type="pathway">
    <text evidence="1">Metabolic intermediate biosynthesis; chorismate biosynthesis; chorismate from D-erythrose 4-phosphate and phosphoenolpyruvate: step 7/7.</text>
</comment>
<comment type="subunit">
    <text evidence="1">Homotetramer.</text>
</comment>
<comment type="similarity">
    <text evidence="1">Belongs to the chorismate synthase family.</text>
</comment>
<dbReference type="EC" id="4.2.3.5" evidence="1"/>
<dbReference type="EMBL" id="AF124600">
    <property type="protein sequence ID" value="AAD27838.2"/>
    <property type="molecule type" value="Genomic_DNA"/>
</dbReference>
<dbReference type="EMBL" id="BA000036">
    <property type="protein sequence ID" value="BAB99016.1"/>
    <property type="molecule type" value="Genomic_DNA"/>
</dbReference>
<dbReference type="EMBL" id="BX927152">
    <property type="protein sequence ID" value="CAF21632.1"/>
    <property type="molecule type" value="Genomic_DNA"/>
</dbReference>
<dbReference type="RefSeq" id="NP_600837.1">
    <property type="nucleotide sequence ID" value="NC_003450.3"/>
</dbReference>
<dbReference type="SMR" id="Q9X5D0"/>
<dbReference type="STRING" id="196627.cg1829"/>
<dbReference type="KEGG" id="cgb:cg1829"/>
<dbReference type="KEGG" id="cgl:Cgl1623"/>
<dbReference type="PATRIC" id="fig|196627.13.peg.1585"/>
<dbReference type="eggNOG" id="COG0082">
    <property type="taxonomic scope" value="Bacteria"/>
</dbReference>
<dbReference type="HOGENOM" id="CLU_034547_2_0_11"/>
<dbReference type="OrthoDB" id="9771806at2"/>
<dbReference type="BioCyc" id="CORYNE:G18NG-11208-MONOMER"/>
<dbReference type="UniPathway" id="UPA00053">
    <property type="reaction ID" value="UER00090"/>
</dbReference>
<dbReference type="Proteomes" id="UP000000582">
    <property type="component" value="Chromosome"/>
</dbReference>
<dbReference type="Proteomes" id="UP000001009">
    <property type="component" value="Chromosome"/>
</dbReference>
<dbReference type="GO" id="GO:0005829">
    <property type="term" value="C:cytosol"/>
    <property type="evidence" value="ECO:0007669"/>
    <property type="project" value="TreeGrafter"/>
</dbReference>
<dbReference type="GO" id="GO:0004107">
    <property type="term" value="F:chorismate synthase activity"/>
    <property type="evidence" value="ECO:0007669"/>
    <property type="project" value="UniProtKB-UniRule"/>
</dbReference>
<dbReference type="GO" id="GO:0010181">
    <property type="term" value="F:FMN binding"/>
    <property type="evidence" value="ECO:0007669"/>
    <property type="project" value="TreeGrafter"/>
</dbReference>
<dbReference type="GO" id="GO:0008652">
    <property type="term" value="P:amino acid biosynthetic process"/>
    <property type="evidence" value="ECO:0007669"/>
    <property type="project" value="UniProtKB-KW"/>
</dbReference>
<dbReference type="GO" id="GO:0009073">
    <property type="term" value="P:aromatic amino acid family biosynthetic process"/>
    <property type="evidence" value="ECO:0007669"/>
    <property type="project" value="UniProtKB-KW"/>
</dbReference>
<dbReference type="GO" id="GO:0009423">
    <property type="term" value="P:chorismate biosynthetic process"/>
    <property type="evidence" value="ECO:0007669"/>
    <property type="project" value="UniProtKB-UniRule"/>
</dbReference>
<dbReference type="CDD" id="cd07304">
    <property type="entry name" value="Chorismate_synthase"/>
    <property type="match status" value="1"/>
</dbReference>
<dbReference type="FunFam" id="3.60.150.10:FF:000002">
    <property type="entry name" value="Chorismate synthase"/>
    <property type="match status" value="1"/>
</dbReference>
<dbReference type="Gene3D" id="3.60.150.10">
    <property type="entry name" value="Chorismate synthase AroC"/>
    <property type="match status" value="1"/>
</dbReference>
<dbReference type="HAMAP" id="MF_00300">
    <property type="entry name" value="Chorismate_synth"/>
    <property type="match status" value="1"/>
</dbReference>
<dbReference type="InterPro" id="IPR000453">
    <property type="entry name" value="Chorismate_synth"/>
</dbReference>
<dbReference type="InterPro" id="IPR035904">
    <property type="entry name" value="Chorismate_synth_AroC_sf"/>
</dbReference>
<dbReference type="InterPro" id="IPR020541">
    <property type="entry name" value="Chorismate_synthase_CS"/>
</dbReference>
<dbReference type="NCBIfam" id="TIGR00033">
    <property type="entry name" value="aroC"/>
    <property type="match status" value="1"/>
</dbReference>
<dbReference type="NCBIfam" id="NF003793">
    <property type="entry name" value="PRK05382.1"/>
    <property type="match status" value="1"/>
</dbReference>
<dbReference type="PANTHER" id="PTHR21085">
    <property type="entry name" value="CHORISMATE SYNTHASE"/>
    <property type="match status" value="1"/>
</dbReference>
<dbReference type="PANTHER" id="PTHR21085:SF0">
    <property type="entry name" value="CHORISMATE SYNTHASE"/>
    <property type="match status" value="1"/>
</dbReference>
<dbReference type="Pfam" id="PF01264">
    <property type="entry name" value="Chorismate_synt"/>
    <property type="match status" value="1"/>
</dbReference>
<dbReference type="PIRSF" id="PIRSF001456">
    <property type="entry name" value="Chorismate_synth"/>
    <property type="match status" value="1"/>
</dbReference>
<dbReference type="SUPFAM" id="SSF103263">
    <property type="entry name" value="Chorismate synthase, AroC"/>
    <property type="match status" value="1"/>
</dbReference>
<dbReference type="PROSITE" id="PS00787">
    <property type="entry name" value="CHORISMATE_SYNTHASE_1"/>
    <property type="match status" value="1"/>
</dbReference>
<dbReference type="PROSITE" id="PS00788">
    <property type="entry name" value="CHORISMATE_SYNTHASE_2"/>
    <property type="match status" value="1"/>
</dbReference>
<dbReference type="PROSITE" id="PS00789">
    <property type="entry name" value="CHORISMATE_SYNTHASE_3"/>
    <property type="match status" value="1"/>
</dbReference>
<reference key="1">
    <citation type="submission" date="1999-01" db="EMBL/GenBank/DDBJ databases">
        <title>Genetic aspects of the prechorismate pathway in Corynebacterium glutamicum.</title>
        <authorList>
            <person name="Burke K.G."/>
            <person name="Joy J."/>
            <person name="O'Donohue M.R."/>
            <person name="Dunican L.K."/>
        </authorList>
    </citation>
    <scope>NUCLEOTIDE SEQUENCE [GENOMIC DNA]</scope>
    <source>
        <strain>ATCC 13059 / LMG 3658 / NCIB 10332 / AS019 / 613</strain>
    </source>
</reference>
<reference key="2">
    <citation type="journal article" date="2003" name="Appl. Microbiol. Biotechnol.">
        <title>The Corynebacterium glutamicum genome: features and impacts on biotechnological processes.</title>
        <authorList>
            <person name="Ikeda M."/>
            <person name="Nakagawa S."/>
        </authorList>
    </citation>
    <scope>NUCLEOTIDE SEQUENCE [LARGE SCALE GENOMIC DNA]</scope>
    <source>
        <strain>ATCC 13032 / DSM 20300 / JCM 1318 / BCRC 11384 / CCUG 27702 / LMG 3730 / NBRC 12168 / NCIMB 10025 / NRRL B-2784 / 534</strain>
    </source>
</reference>
<reference key="3">
    <citation type="journal article" date="2003" name="J. Biotechnol.">
        <title>The complete Corynebacterium glutamicum ATCC 13032 genome sequence and its impact on the production of L-aspartate-derived amino acids and vitamins.</title>
        <authorList>
            <person name="Kalinowski J."/>
            <person name="Bathe B."/>
            <person name="Bartels D."/>
            <person name="Bischoff N."/>
            <person name="Bott M."/>
            <person name="Burkovski A."/>
            <person name="Dusch N."/>
            <person name="Eggeling L."/>
            <person name="Eikmanns B.J."/>
            <person name="Gaigalat L."/>
            <person name="Goesmann A."/>
            <person name="Hartmann M."/>
            <person name="Huthmacher K."/>
            <person name="Kraemer R."/>
            <person name="Linke B."/>
            <person name="McHardy A.C."/>
            <person name="Meyer F."/>
            <person name="Moeckel B."/>
            <person name="Pfefferle W."/>
            <person name="Puehler A."/>
            <person name="Rey D.A."/>
            <person name="Rueckert C."/>
            <person name="Rupp O."/>
            <person name="Sahm H."/>
            <person name="Wendisch V.F."/>
            <person name="Wiegraebe I."/>
            <person name="Tauch A."/>
        </authorList>
    </citation>
    <scope>NUCLEOTIDE SEQUENCE [LARGE SCALE GENOMIC DNA]</scope>
    <source>
        <strain>ATCC 13032 / DSM 20300 / JCM 1318 / BCRC 11384 / CCUG 27702 / LMG 3730 / NBRC 12168 / NCIMB 10025 / NRRL B-2784 / 534</strain>
    </source>
</reference>
<organism>
    <name type="scientific">Corynebacterium glutamicum (strain ATCC 13032 / DSM 20300 / JCM 1318 / BCRC 11384 / CCUG 27702 / LMG 3730 / NBRC 12168 / NCIMB 10025 / NRRL B-2784 / 534)</name>
    <dbReference type="NCBI Taxonomy" id="196627"/>
    <lineage>
        <taxon>Bacteria</taxon>
        <taxon>Bacillati</taxon>
        <taxon>Actinomycetota</taxon>
        <taxon>Actinomycetes</taxon>
        <taxon>Mycobacteriales</taxon>
        <taxon>Corynebacteriaceae</taxon>
        <taxon>Corynebacterium</taxon>
    </lineage>
</organism>
<name>AROC_CORGL</name>
<accession>Q9X5D0</accession>
<proteinExistence type="inferred from homology"/>
<gene>
    <name evidence="1" type="primary">aroC</name>
    <name type="ordered locus">Cgl1623</name>
    <name type="ordered locus">cg1829</name>
</gene>
<protein>
    <recommendedName>
        <fullName evidence="1">Chorismate synthase</fullName>
        <shortName evidence="1">CS</shortName>
        <ecNumber evidence="1">4.2.3.5</ecNumber>
    </recommendedName>
    <alternativeName>
        <fullName evidence="1">5-enolpyruvylshikimate-3-phosphate phospholyase</fullName>
    </alternativeName>
</protein>